<feature type="initiator methionine" description="Removed" evidence="3">
    <location>
        <position position="1"/>
    </location>
</feature>
<feature type="chain" id="PRO_0000097092" description="Pentalenene synthase">
    <location>
        <begin position="2"/>
        <end position="337"/>
    </location>
</feature>
<feature type="short sequence motif" description="DDXXD motif">
    <location>
        <begin position="80"/>
        <end position="84"/>
    </location>
</feature>
<feature type="binding site">
    <location>
        <position position="80"/>
    </location>
    <ligand>
        <name>Mg(2+)</name>
        <dbReference type="ChEBI" id="CHEBI:18420"/>
        <label>1</label>
    </ligand>
</feature>
<feature type="binding site">
    <location>
        <position position="80"/>
    </location>
    <ligand>
        <name>Mg(2+)</name>
        <dbReference type="ChEBI" id="CHEBI:18420"/>
        <label>2</label>
    </ligand>
</feature>
<feature type="binding site">
    <location>
        <position position="84"/>
    </location>
    <ligand>
        <name>Mg(2+)</name>
        <dbReference type="ChEBI" id="CHEBI:18420"/>
        <label>1</label>
    </ligand>
</feature>
<feature type="binding site">
    <location>
        <position position="84"/>
    </location>
    <ligand>
        <name>Mg(2+)</name>
        <dbReference type="ChEBI" id="CHEBI:18420"/>
        <label>2</label>
    </ligand>
</feature>
<feature type="binding site">
    <location>
        <position position="219"/>
    </location>
    <ligand>
        <name>Mg(2+)</name>
        <dbReference type="ChEBI" id="CHEBI:18420"/>
        <label>3</label>
    </ligand>
</feature>
<feature type="binding site" evidence="1">
    <location>
        <position position="223"/>
    </location>
    <ligand>
        <name>Mg(2+)</name>
        <dbReference type="ChEBI" id="CHEBI:18420"/>
        <label>3</label>
    </ligand>
</feature>
<feature type="binding site" evidence="1">
    <location>
        <position position="227"/>
    </location>
    <ligand>
        <name>Mg(2+)</name>
        <dbReference type="ChEBI" id="CHEBI:18420"/>
        <label>3</label>
    </ligand>
</feature>
<feature type="disulfide bond">
    <location>
        <begin position="128"/>
        <end position="136"/>
    </location>
</feature>
<feature type="mutagenesis site" description="Loss of activity." evidence="2">
    <original>F</original>
    <variation>A</variation>
    <location>
        <position position="76"/>
    </location>
</feature>
<feature type="mutagenesis site" description="Loss of activity." evidence="2">
    <original>F</original>
    <variation>A</variation>
    <location>
        <position position="77"/>
    </location>
</feature>
<feature type="mutagenesis site" description="20-fold decrease in activity and catalytic efficiency." evidence="2">
    <original>F</original>
    <variation>Y</variation>
    <location>
        <position position="77"/>
    </location>
</feature>
<feature type="mutagenesis site" description="150-fold decrease in activity. 20-fold increase in Km for FPP." evidence="2">
    <original>D</original>
    <variation>E</variation>
    <location>
        <position position="80"/>
    </location>
</feature>
<feature type="mutagenesis site" description="50-fold decrease in activity. 9-fold increase in Km for FPP." evidence="2">
    <original>D</original>
    <variation>E</variation>
    <location>
        <position position="81"/>
    </location>
</feature>
<feature type="mutagenesis site" description="2.5-fold increase in activity. 7-fold increase in Km for FPP." evidence="2">
    <original>D</original>
    <variation>E</variation>
    <location>
        <position position="84"/>
    </location>
</feature>
<feature type="mutagenesis site" description="Loss of activity." evidence="2">
    <original>N</original>
    <variation>A</variation>
    <location>
        <position position="219"/>
    </location>
</feature>
<feature type="mutagenesis site" description="60-fold decrease in activity. 55-fold increase in Km for FPP." evidence="2">
    <original>N</original>
    <variation>D</variation>
    <location>
        <position position="219"/>
    </location>
</feature>
<feature type="mutagenesis site" description="Loss of activity." evidence="2">
    <original>N</original>
    <variation>L</variation>
    <location>
        <position position="219"/>
    </location>
</feature>
<feature type="mutagenesis site" description="12-fold decrease in activity. 25-fold decrease in catalytic efficiency." evidence="2">
    <original>WH</original>
    <variation>FF</variation>
    <location>
        <begin position="308"/>
        <end position="309"/>
    </location>
</feature>
<feature type="mutagenesis site" description="4-fold decrease in activity. 2-fold decrease in catalytic efficiency." evidence="2">
    <original>W</original>
    <variation>F</variation>
    <location>
        <position position="308"/>
    </location>
</feature>
<feature type="mutagenesis site" description="3-fold decrease in activity." evidence="2 4">
    <original>H</original>
    <variation>A</variation>
    <location>
        <position position="309"/>
    </location>
</feature>
<feature type="mutagenesis site" description="4-fold decrease in activity." evidence="2 4">
    <original>H</original>
    <variation>C</variation>
    <location>
        <position position="309"/>
    </location>
</feature>
<feature type="mutagenesis site" description="17-fold decrease in activity. 5-fold increase in Km for FPP." evidence="2 4">
    <original>H</original>
    <variation>F</variation>
    <location>
        <position position="309"/>
    </location>
</feature>
<feature type="mutagenesis site" description="3-fold decrease in activity." evidence="2 4">
    <original>H</original>
    <variation>S</variation>
    <location>
        <position position="309"/>
    </location>
</feature>
<feature type="sequence conflict" description="In Ref. 1; AA sequence." evidence="5" ref="1">
    <original>H</original>
    <variation>W</variation>
    <location>
        <position position="118"/>
    </location>
</feature>
<feature type="helix" evidence="7">
    <location>
        <begin position="19"/>
        <end position="24"/>
    </location>
</feature>
<feature type="turn" evidence="7">
    <location>
        <begin position="25"/>
        <end position="27"/>
    </location>
</feature>
<feature type="helix" evidence="7">
    <location>
        <begin position="28"/>
        <end position="32"/>
    </location>
</feature>
<feature type="helix" evidence="7">
    <location>
        <begin position="39"/>
        <end position="47"/>
    </location>
</feature>
<feature type="helix" evidence="7">
    <location>
        <begin position="50"/>
        <end position="57"/>
    </location>
</feature>
<feature type="helix" evidence="7">
    <location>
        <begin position="63"/>
        <end position="81"/>
    </location>
</feature>
<feature type="helix" evidence="7">
    <location>
        <begin position="86"/>
        <end position="89"/>
    </location>
</feature>
<feature type="helix" evidence="7">
    <location>
        <begin position="91"/>
        <end position="102"/>
    </location>
</feature>
<feature type="helix" evidence="7">
    <location>
        <begin position="103"/>
        <end position="105"/>
    </location>
</feature>
<feature type="helix" evidence="7">
    <location>
        <begin position="115"/>
        <end position="128"/>
    </location>
</feature>
<feature type="helix" evidence="7">
    <location>
        <begin position="133"/>
        <end position="158"/>
    </location>
</feature>
<feature type="helix" evidence="7">
    <location>
        <begin position="166"/>
        <end position="176"/>
    </location>
</feature>
<feature type="helix" evidence="7">
    <location>
        <begin position="179"/>
        <end position="190"/>
    </location>
</feature>
<feature type="helix" evidence="7">
    <location>
        <begin position="196"/>
        <end position="199"/>
    </location>
</feature>
<feature type="helix" evidence="7">
    <location>
        <begin position="202"/>
        <end position="222"/>
    </location>
</feature>
<feature type="helix" evidence="7">
    <location>
        <begin position="224"/>
        <end position="229"/>
    </location>
</feature>
<feature type="helix" evidence="7">
    <location>
        <begin position="236"/>
        <end position="244"/>
    </location>
</feature>
<feature type="helix" evidence="7">
    <location>
        <begin position="248"/>
        <end position="271"/>
    </location>
</feature>
<feature type="helix" evidence="7">
    <location>
        <begin position="273"/>
        <end position="279"/>
    </location>
</feature>
<feature type="helix" evidence="7">
    <location>
        <begin position="284"/>
        <end position="296"/>
    </location>
</feature>
<feature type="helix" evidence="7">
    <location>
        <begin position="298"/>
        <end position="308"/>
    </location>
</feature>
<feature type="turn" evidence="6">
    <location>
        <begin position="309"/>
        <end position="311"/>
    </location>
</feature>
<feature type="helix" evidence="8">
    <location>
        <begin position="313"/>
        <end position="315"/>
    </location>
</feature>
<feature type="turn" evidence="8">
    <location>
        <begin position="326"/>
        <end position="329"/>
    </location>
</feature>
<feature type="helix" evidence="8">
    <location>
        <begin position="330"/>
        <end position="333"/>
    </location>
</feature>
<evidence type="ECO:0000250" key="1"/>
<evidence type="ECO:0000269" key="2">
    <source>
    </source>
</evidence>
<evidence type="ECO:0000269" key="3">
    <source>
    </source>
</evidence>
<evidence type="ECO:0000269" key="4">
    <source ref="3"/>
</evidence>
<evidence type="ECO:0000305" key="5"/>
<evidence type="ECO:0007829" key="6">
    <source>
        <dbReference type="PDB" id="1PS1"/>
    </source>
</evidence>
<evidence type="ECO:0007829" key="7">
    <source>
        <dbReference type="PDB" id="6WKC"/>
    </source>
</evidence>
<evidence type="ECO:0007829" key="8">
    <source>
        <dbReference type="PDB" id="9C7L"/>
    </source>
</evidence>
<organism>
    <name type="scientific">Streptomyces exfoliatus</name>
    <name type="common">Streptomyces hydrogenans</name>
    <dbReference type="NCBI Taxonomy" id="1905"/>
    <lineage>
        <taxon>Bacteria</taxon>
        <taxon>Bacillati</taxon>
        <taxon>Actinomycetota</taxon>
        <taxon>Actinomycetes</taxon>
        <taxon>Kitasatosporales</taxon>
        <taxon>Streptomycetaceae</taxon>
        <taxon>Streptomyces</taxon>
    </lineage>
</organism>
<proteinExistence type="evidence at protein level"/>
<accession>Q55012</accession>
<accession>E3VWK6</accession>
<comment type="function">
    <text evidence="3">Catalyzes the cyclization of farnesyl diphosphate (FPP) to the tricyclic sesquiterpene pentalenene, which is the hydrocarbon precursor of the pentalenolactone family of antibiotics produced by a variety of Streptomyces species.</text>
</comment>
<comment type="catalytic activity">
    <reaction evidence="2">
        <text>(2E,6E)-farnesyl diphosphate = pentalenene + diphosphate</text>
        <dbReference type="Rhea" id="RHEA:18081"/>
        <dbReference type="ChEBI" id="CHEBI:17251"/>
        <dbReference type="ChEBI" id="CHEBI:33019"/>
        <dbReference type="ChEBI" id="CHEBI:175763"/>
        <dbReference type="EC" id="4.2.3.7"/>
    </reaction>
</comment>
<comment type="cofactor">
    <cofactor evidence="1">
        <name>Mg(2+)</name>
        <dbReference type="ChEBI" id="CHEBI:18420"/>
    </cofactor>
    <text evidence="1">Binds 3 Mg(2+) ions per subunit.</text>
</comment>
<comment type="biophysicochemical properties">
    <kinetics>
        <KM evidence="3">310 nM for FPP</KM>
    </kinetics>
    <phDependence>
        <text evidence="3">Optimum pH is 8.2-8.4.</text>
    </phDependence>
</comment>
<comment type="pathway">
    <text>Sesquiterpene biosynthesis; pentalenene biosynthesis; pentalenene from farnesyl diphosphate: step 1/1.</text>
</comment>
<comment type="pathway">
    <text>Antibiotic biosynthesis; pentalenolactone biosynthesis.</text>
</comment>
<comment type="subunit">
    <text evidence="3">Monomer.</text>
</comment>
<comment type="domain">
    <text>The Asp-Asp-Xaa-Xaa-Asp/Glu (DDXXD/E) motif is important for the catalytic activity, presumably through binding to Mg(2+).</text>
</comment>
<comment type="miscellaneous">
    <text>All the mutants (Ref.3, PubMed:12083921) retained substantial pentalenene synthase activity accompanied by production of varying proportions of abortive cyclization products such as germacrene A, protoilludene and beta-caryophyllene. This is a true derailment or diversion of the normal cyclization reaction, and not simply the consequence of trapping of a normally cryptic, cationic intermediate.</text>
</comment>
<comment type="similarity">
    <text evidence="5">Belongs to the terpene synthase family.</text>
</comment>
<protein>
    <recommendedName>
        <fullName>Pentalenene synthase</fullName>
        <shortName>PS</shortName>
        <ecNumber>4.2.3.7</ecNumber>
    </recommendedName>
    <alternativeName>
        <fullName>Pentalenolactone biosynthesis protein A</fullName>
    </alternativeName>
    <alternativeName>
        <fullName>Sesquiterpene cyclase</fullName>
    </alternativeName>
    <alternativeName>
        <fullName>Sesquiterpene synthase</fullName>
    </alternativeName>
</protein>
<sequence length="337" mass="38002">MPQDVDFHIPLPGRQSPDHARAEAEQLAWPRSLGLIRSDAAAERHLRGGYADLASRFYPHATGADLDLGVDLMSWFFLFDDLFDGPRGENPEDTKQLTDQVAAALDGPLPDTAPPIAHGFADIWRRTCEGMTPAWCARSARHWRNYFDGYVDEAESRFWNAPCDSAAQYLAMRRHTIGVQPTVDLAERAGRFEVPHRVFDSAVMSAMLQIAVDVNLLLNDIASLEKEEARGEQNNMVMILRREHGWSKSRSVSHMQNEVRARLEQYLLLESCLPKVGEIYQLDTAEREALERYRTDAVRTVIRGSYDWHRSSGRYDAEFALAAGAQGYLEELGSSAH</sequence>
<keyword id="KW-0002">3D-structure</keyword>
<keyword id="KW-0045">Antibiotic biosynthesis</keyword>
<keyword id="KW-0903">Direct protein sequencing</keyword>
<keyword id="KW-1015">Disulfide bond</keyword>
<keyword id="KW-0456">Lyase</keyword>
<keyword id="KW-0460">Magnesium</keyword>
<keyword id="KW-0479">Metal-binding</keyword>
<name>PENA_STREX</name>
<reference key="1">
    <citation type="journal article" date="1994" name="Biochemistry">
        <title>Pentalenene synthase. Purification, molecular cloning, sequencing, and high-level expression in Escherichia coli of a terpenoid cyclase from Streptomyces UC5319.</title>
        <authorList>
            <person name="Cane D.E."/>
            <person name="Sohng J.-K."/>
            <person name="Lamberson C.R."/>
            <person name="Rudnicki S.M."/>
            <person name="Wu Z."/>
            <person name="Lloyd M.D."/>
            <person name="Oliver J.S."/>
            <person name="Hubbard B.R."/>
        </authorList>
    </citation>
    <scope>NUCLEOTIDE SEQUENCE [GENOMIC DNA]</scope>
    <scope>PROTEIN SEQUENCE OF 2-28; 57-73; 96-120 AND 145-157</scope>
    <scope>FUNCTION</scope>
    <scope>SUBUNIT</scope>
    <scope>COFACTOR</scope>
    <scope>BIOPHYSICOCHEMICAL PROPERTIES</scope>
    <source>
        <strain>UC5319</strain>
    </source>
</reference>
<reference key="2">
    <citation type="journal article" date="2011" name="J. Am. Chem. Soc.">
        <title>Genome mining in streptomyces. Discovery of an unprecedented P450-catalyzed oxidative rearrangement that is the final step in the biosynthesis of pentalenolactone.</title>
        <authorList>
            <person name="Zhu D."/>
            <person name="Seo M.J."/>
            <person name="Ikeda H."/>
            <person name="Cane D.E."/>
        </authorList>
    </citation>
    <scope>NUCLEOTIDE SEQUENCE [GENOMIC DNA]</scope>
    <source>
        <strain>UC5319</strain>
    </source>
</reference>
<reference key="3">
    <citation type="journal article" date="1999" name="J. Am. Chem. Soc.">
        <title>Pentalenene synthase. Histidine-309 is not required for catalytic activity.</title>
        <authorList>
            <person name="Seemann M."/>
            <person name="Zhai G."/>
            <person name="Umezawa K."/>
            <person name="Cane D.E."/>
        </authorList>
    </citation>
    <scope>MUTAGENESIS OF HIS-309</scope>
</reference>
<reference key="4">
    <citation type="journal article" date="1997" name="Science">
        <title>Crystal structure of pentalenene synthase: mechanistic insights on terpenoid cyclization reactions in biology.</title>
        <authorList>
            <person name="Lesburg C.A."/>
            <person name="Zhai G."/>
            <person name="Cane D.E."/>
            <person name="Christianson D.W."/>
        </authorList>
    </citation>
    <scope>X-RAY CRYSTALLOGRAPHY (2.6 ANGSTROMS)</scope>
</reference>
<reference key="5">
    <citation type="journal article" date="2002" name="J. Am. Chem. Soc.">
        <title>Pentalenene synthase. Analysis of active site residues by site-directed mutagenesis.</title>
        <authorList>
            <person name="Seemann M."/>
            <person name="Zhai G."/>
            <person name="de Kraker J.-W."/>
            <person name="Paschall C.M."/>
            <person name="Christianson D.W."/>
            <person name="Cane D.E."/>
        </authorList>
    </citation>
    <scope>X-RAY CRYSTALLOGRAPHY (2.9 ANGSTROMS) OF MUTANT LEU-219</scope>
    <scope>CATALYTIC ACTIVITY</scope>
    <scope>MUTAGENESIS OF PHE-76; PHE-77; ASP-80; ASP-81; ASP-84; ASN-219; 308-TRP-HIS-309; TRP-308 AND HIS-309</scope>
</reference>
<gene>
    <name type="primary">penA</name>
</gene>
<dbReference type="EC" id="4.2.3.7"/>
<dbReference type="EMBL" id="U05213">
    <property type="protein sequence ID" value="AAA19131.1"/>
    <property type="molecule type" value="Unassigned_DNA"/>
</dbReference>
<dbReference type="EMBL" id="HQ292066">
    <property type="protein sequence ID" value="ADO85594.1"/>
    <property type="molecule type" value="Genomic_DNA"/>
</dbReference>
<dbReference type="PDB" id="1HM4">
    <property type="method" value="X-ray"/>
    <property type="resolution" value="3.47 A"/>
    <property type="chains" value="A/B=2-337"/>
</dbReference>
<dbReference type="PDB" id="1HM7">
    <property type="method" value="X-ray"/>
    <property type="resolution" value="2.90 A"/>
    <property type="chains" value="A/B=2-337"/>
</dbReference>
<dbReference type="PDB" id="1PS1">
    <property type="method" value="X-ray"/>
    <property type="resolution" value="2.60 A"/>
    <property type="chains" value="A/B=1-337"/>
</dbReference>
<dbReference type="PDB" id="6WKC">
    <property type="method" value="X-ray"/>
    <property type="resolution" value="1.65 A"/>
    <property type="chains" value="A/B=1-337"/>
</dbReference>
<dbReference type="PDB" id="6WKD">
    <property type="method" value="X-ray"/>
    <property type="resolution" value="2.20 A"/>
    <property type="chains" value="A/B=1-337"/>
</dbReference>
<dbReference type="PDB" id="6WKE">
    <property type="method" value="X-ray"/>
    <property type="resolution" value="2.40 A"/>
    <property type="chains" value="A/B=1-337"/>
</dbReference>
<dbReference type="PDB" id="6WKF">
    <property type="method" value="X-ray"/>
    <property type="resolution" value="2.50 A"/>
    <property type="chains" value="A/B=1-337"/>
</dbReference>
<dbReference type="PDB" id="6WKG">
    <property type="method" value="X-ray"/>
    <property type="resolution" value="2.30 A"/>
    <property type="chains" value="A/B=1-337"/>
</dbReference>
<dbReference type="PDB" id="6WKH">
    <property type="method" value="X-ray"/>
    <property type="resolution" value="2.55 A"/>
    <property type="chains" value="A/B=1-337"/>
</dbReference>
<dbReference type="PDB" id="6WKI">
    <property type="method" value="X-ray"/>
    <property type="resolution" value="2.35 A"/>
    <property type="chains" value="A/B=1-337"/>
</dbReference>
<dbReference type="PDB" id="6WKJ">
    <property type="method" value="X-ray"/>
    <property type="resolution" value="2.30 A"/>
    <property type="chains" value="A/B=1-337"/>
</dbReference>
<dbReference type="PDB" id="9C7K">
    <property type="method" value="X-ray"/>
    <property type="resolution" value="2.50 A"/>
    <property type="chains" value="A/B=1-337"/>
</dbReference>
<dbReference type="PDB" id="9C7L">
    <property type="method" value="X-ray"/>
    <property type="resolution" value="2.20 A"/>
    <property type="chains" value="A/B=1-337"/>
</dbReference>
<dbReference type="PDB" id="9C7M">
    <property type="method" value="X-ray"/>
    <property type="resolution" value="2.65 A"/>
    <property type="chains" value="A/B=1-337"/>
</dbReference>
<dbReference type="PDBsum" id="1HM4"/>
<dbReference type="PDBsum" id="1HM7"/>
<dbReference type="PDBsum" id="1PS1"/>
<dbReference type="PDBsum" id="6WKC"/>
<dbReference type="PDBsum" id="6WKD"/>
<dbReference type="PDBsum" id="6WKE"/>
<dbReference type="PDBsum" id="6WKF"/>
<dbReference type="PDBsum" id="6WKG"/>
<dbReference type="PDBsum" id="6WKH"/>
<dbReference type="PDBsum" id="6WKI"/>
<dbReference type="PDBsum" id="6WKJ"/>
<dbReference type="PDBsum" id="9C7K"/>
<dbReference type="PDBsum" id="9C7L"/>
<dbReference type="PDBsum" id="9C7M"/>
<dbReference type="SMR" id="Q55012"/>
<dbReference type="BioCyc" id="MetaCyc:MONOMER-16834"/>
<dbReference type="BRENDA" id="4.2.3.7">
    <property type="organism ID" value="6010"/>
</dbReference>
<dbReference type="UniPathway" id="UPA00171">
    <property type="reaction ID" value="UER00581"/>
</dbReference>
<dbReference type="UniPathway" id="UPA00974"/>
<dbReference type="EvolutionaryTrace" id="Q55012"/>
<dbReference type="GO" id="GO:0046872">
    <property type="term" value="F:metal ion binding"/>
    <property type="evidence" value="ECO:0007669"/>
    <property type="project" value="UniProtKB-KW"/>
</dbReference>
<dbReference type="GO" id="GO:0050467">
    <property type="term" value="F:pentalenene synthase activity"/>
    <property type="evidence" value="ECO:0007669"/>
    <property type="project" value="UniProtKB-EC"/>
</dbReference>
<dbReference type="GO" id="GO:0017000">
    <property type="term" value="P:antibiotic biosynthetic process"/>
    <property type="evidence" value="ECO:0007669"/>
    <property type="project" value="UniProtKB-KW"/>
</dbReference>
<dbReference type="CDD" id="cd00687">
    <property type="entry name" value="Terpene_cyclase_nonplant_C1"/>
    <property type="match status" value="1"/>
</dbReference>
<dbReference type="Gene3D" id="1.10.600.10">
    <property type="entry name" value="Farnesyl Diphosphate Synthase"/>
    <property type="match status" value="1"/>
</dbReference>
<dbReference type="InterPro" id="IPR008949">
    <property type="entry name" value="Isoprenoid_synthase_dom_sf"/>
</dbReference>
<dbReference type="InterPro" id="IPR054969">
    <property type="entry name" value="PentlnSyn"/>
</dbReference>
<dbReference type="InterPro" id="IPR034686">
    <property type="entry name" value="Terpene_cyclase-like_2"/>
</dbReference>
<dbReference type="NCBIfam" id="NF045811">
    <property type="entry name" value="PentlnSynPtlA"/>
    <property type="match status" value="1"/>
</dbReference>
<dbReference type="PANTHER" id="PTHR35201:SF4">
    <property type="entry name" value="BETA-PINACENE SYNTHASE-RELATED"/>
    <property type="match status" value="1"/>
</dbReference>
<dbReference type="PANTHER" id="PTHR35201">
    <property type="entry name" value="TERPENE SYNTHASE"/>
    <property type="match status" value="1"/>
</dbReference>
<dbReference type="Pfam" id="PF19086">
    <property type="entry name" value="Terpene_syn_C_2"/>
    <property type="match status" value="1"/>
</dbReference>
<dbReference type="SFLD" id="SFLDS00005">
    <property type="entry name" value="Isoprenoid_Synthase_Type_I"/>
    <property type="match status" value="1"/>
</dbReference>
<dbReference type="SFLD" id="SFLDG01020">
    <property type="entry name" value="Terpene_Cyclase_Like_2"/>
    <property type="match status" value="1"/>
</dbReference>
<dbReference type="SUPFAM" id="SSF48576">
    <property type="entry name" value="Terpenoid synthases"/>
    <property type="match status" value="1"/>
</dbReference>